<reference key="1">
    <citation type="journal article" date="2004" name="Genome Res.">
        <title>The status, quality, and expansion of the NIH full-length cDNA project: the Mammalian Gene Collection (MGC).</title>
        <authorList>
            <consortium name="The MGC Project Team"/>
        </authorList>
    </citation>
    <scope>NUCLEOTIDE SEQUENCE [LARGE SCALE MRNA]</scope>
    <source>
        <strain>FVB/N</strain>
        <tissue>Mammary tumor</tissue>
    </source>
</reference>
<reference key="2">
    <citation type="journal article" date="2005" name="Science">
        <title>The transcriptional landscape of the mammalian genome.</title>
        <authorList>
            <person name="Carninci P."/>
            <person name="Kasukawa T."/>
            <person name="Katayama S."/>
            <person name="Gough J."/>
            <person name="Frith M.C."/>
            <person name="Maeda N."/>
            <person name="Oyama R."/>
            <person name="Ravasi T."/>
            <person name="Lenhard B."/>
            <person name="Wells C."/>
            <person name="Kodzius R."/>
            <person name="Shimokawa K."/>
            <person name="Bajic V.B."/>
            <person name="Brenner S.E."/>
            <person name="Batalov S."/>
            <person name="Forrest A.R."/>
            <person name="Zavolan M."/>
            <person name="Davis M.J."/>
            <person name="Wilming L.G."/>
            <person name="Aidinis V."/>
            <person name="Allen J.E."/>
            <person name="Ambesi-Impiombato A."/>
            <person name="Apweiler R."/>
            <person name="Aturaliya R.N."/>
            <person name="Bailey T.L."/>
            <person name="Bansal M."/>
            <person name="Baxter L."/>
            <person name="Beisel K.W."/>
            <person name="Bersano T."/>
            <person name="Bono H."/>
            <person name="Chalk A.M."/>
            <person name="Chiu K.P."/>
            <person name="Choudhary V."/>
            <person name="Christoffels A."/>
            <person name="Clutterbuck D.R."/>
            <person name="Crowe M.L."/>
            <person name="Dalla E."/>
            <person name="Dalrymple B.P."/>
            <person name="de Bono B."/>
            <person name="Della Gatta G."/>
            <person name="di Bernardo D."/>
            <person name="Down T."/>
            <person name="Engstrom P."/>
            <person name="Fagiolini M."/>
            <person name="Faulkner G."/>
            <person name="Fletcher C.F."/>
            <person name="Fukushima T."/>
            <person name="Furuno M."/>
            <person name="Futaki S."/>
            <person name="Gariboldi M."/>
            <person name="Georgii-Hemming P."/>
            <person name="Gingeras T.R."/>
            <person name="Gojobori T."/>
            <person name="Green R.E."/>
            <person name="Gustincich S."/>
            <person name="Harbers M."/>
            <person name="Hayashi Y."/>
            <person name="Hensch T.K."/>
            <person name="Hirokawa N."/>
            <person name="Hill D."/>
            <person name="Huminiecki L."/>
            <person name="Iacono M."/>
            <person name="Ikeo K."/>
            <person name="Iwama A."/>
            <person name="Ishikawa T."/>
            <person name="Jakt M."/>
            <person name="Kanapin A."/>
            <person name="Katoh M."/>
            <person name="Kawasawa Y."/>
            <person name="Kelso J."/>
            <person name="Kitamura H."/>
            <person name="Kitano H."/>
            <person name="Kollias G."/>
            <person name="Krishnan S.P."/>
            <person name="Kruger A."/>
            <person name="Kummerfeld S.K."/>
            <person name="Kurochkin I.V."/>
            <person name="Lareau L.F."/>
            <person name="Lazarevic D."/>
            <person name="Lipovich L."/>
            <person name="Liu J."/>
            <person name="Liuni S."/>
            <person name="McWilliam S."/>
            <person name="Madan Babu M."/>
            <person name="Madera M."/>
            <person name="Marchionni L."/>
            <person name="Matsuda H."/>
            <person name="Matsuzawa S."/>
            <person name="Miki H."/>
            <person name="Mignone F."/>
            <person name="Miyake S."/>
            <person name="Morris K."/>
            <person name="Mottagui-Tabar S."/>
            <person name="Mulder N."/>
            <person name="Nakano N."/>
            <person name="Nakauchi H."/>
            <person name="Ng P."/>
            <person name="Nilsson R."/>
            <person name="Nishiguchi S."/>
            <person name="Nishikawa S."/>
            <person name="Nori F."/>
            <person name="Ohara O."/>
            <person name="Okazaki Y."/>
            <person name="Orlando V."/>
            <person name="Pang K.C."/>
            <person name="Pavan W.J."/>
            <person name="Pavesi G."/>
            <person name="Pesole G."/>
            <person name="Petrovsky N."/>
            <person name="Piazza S."/>
            <person name="Reed J."/>
            <person name="Reid J.F."/>
            <person name="Ring B.Z."/>
            <person name="Ringwald M."/>
            <person name="Rost B."/>
            <person name="Ruan Y."/>
            <person name="Salzberg S.L."/>
            <person name="Sandelin A."/>
            <person name="Schneider C."/>
            <person name="Schoenbach C."/>
            <person name="Sekiguchi K."/>
            <person name="Semple C.A."/>
            <person name="Seno S."/>
            <person name="Sessa L."/>
            <person name="Sheng Y."/>
            <person name="Shibata Y."/>
            <person name="Shimada H."/>
            <person name="Shimada K."/>
            <person name="Silva D."/>
            <person name="Sinclair B."/>
            <person name="Sperling S."/>
            <person name="Stupka E."/>
            <person name="Sugiura K."/>
            <person name="Sultana R."/>
            <person name="Takenaka Y."/>
            <person name="Taki K."/>
            <person name="Tammoja K."/>
            <person name="Tan S.L."/>
            <person name="Tang S."/>
            <person name="Taylor M.S."/>
            <person name="Tegner J."/>
            <person name="Teichmann S.A."/>
            <person name="Ueda H.R."/>
            <person name="van Nimwegen E."/>
            <person name="Verardo R."/>
            <person name="Wei C.L."/>
            <person name="Yagi K."/>
            <person name="Yamanishi H."/>
            <person name="Zabarovsky E."/>
            <person name="Zhu S."/>
            <person name="Zimmer A."/>
            <person name="Hide W."/>
            <person name="Bult C."/>
            <person name="Grimmond S.M."/>
            <person name="Teasdale R.D."/>
            <person name="Liu E.T."/>
            <person name="Brusic V."/>
            <person name="Quackenbush J."/>
            <person name="Wahlestedt C."/>
            <person name="Mattick J.S."/>
            <person name="Hume D.A."/>
            <person name="Kai C."/>
            <person name="Sasaki D."/>
            <person name="Tomaru Y."/>
            <person name="Fukuda S."/>
            <person name="Kanamori-Katayama M."/>
            <person name="Suzuki M."/>
            <person name="Aoki J."/>
            <person name="Arakawa T."/>
            <person name="Iida J."/>
            <person name="Imamura K."/>
            <person name="Itoh M."/>
            <person name="Kato T."/>
            <person name="Kawaji H."/>
            <person name="Kawagashira N."/>
            <person name="Kawashima T."/>
            <person name="Kojima M."/>
            <person name="Kondo S."/>
            <person name="Konno H."/>
            <person name="Nakano K."/>
            <person name="Ninomiya N."/>
            <person name="Nishio T."/>
            <person name="Okada M."/>
            <person name="Plessy C."/>
            <person name="Shibata K."/>
            <person name="Shiraki T."/>
            <person name="Suzuki S."/>
            <person name="Tagami M."/>
            <person name="Waki K."/>
            <person name="Watahiki A."/>
            <person name="Okamura-Oho Y."/>
            <person name="Suzuki H."/>
            <person name="Kawai J."/>
            <person name="Hayashizaki Y."/>
        </authorList>
    </citation>
    <scope>NUCLEOTIDE SEQUENCE [LARGE SCALE MRNA] OF 2-459</scope>
    <source>
        <strain>C57BL/6J</strain>
    </source>
</reference>
<reference key="3">
    <citation type="journal article" date="2010" name="Cell">
        <title>A tissue-specific atlas of mouse protein phosphorylation and expression.</title>
        <authorList>
            <person name="Huttlin E.L."/>
            <person name="Jedrychowski M.P."/>
            <person name="Elias J.E."/>
            <person name="Goswami T."/>
            <person name="Rad R."/>
            <person name="Beausoleil S.A."/>
            <person name="Villen J."/>
            <person name="Haas W."/>
            <person name="Sowa M.E."/>
            <person name="Gygi S.P."/>
        </authorList>
    </citation>
    <scope>PHOSPHORYLATION [LARGE SCALE ANALYSIS] AT SER-450</scope>
    <scope>IDENTIFICATION BY MASS SPECTROMETRY [LARGE SCALE ANALYSIS]</scope>
    <source>
        <tissue>Brain</tissue>
        <tissue>Kidney</tissue>
        <tissue>Spleen</tissue>
    </source>
</reference>
<gene>
    <name type="primary">Snx8</name>
</gene>
<protein>
    <recommendedName>
        <fullName>Sorting nexin-8</fullName>
    </recommendedName>
</protein>
<proteinExistence type="evidence at protein level"/>
<evidence type="ECO:0000250" key="1"/>
<evidence type="ECO:0000250" key="2">
    <source>
        <dbReference type="UniProtKB" id="Q9Y5X2"/>
    </source>
</evidence>
<evidence type="ECO:0000255" key="3">
    <source>
        <dbReference type="PROSITE-ProRule" id="PRU00147"/>
    </source>
</evidence>
<evidence type="ECO:0000256" key="4">
    <source>
        <dbReference type="SAM" id="MobiDB-lite"/>
    </source>
</evidence>
<evidence type="ECO:0000305" key="5"/>
<evidence type="ECO:0007744" key="6">
    <source>
    </source>
</evidence>
<name>SNX8_MOUSE</name>
<comment type="function">
    <text evidence="1">May be involved in several stages of intracellular trafficking. May play a role in intracellular protein transport from early endosomes to the trans-Golgi network (By similarity).</text>
</comment>
<comment type="subcellular location">
    <subcellularLocation>
        <location evidence="1">Early endosome membrane</location>
        <topology evidence="1">Peripheral membrane protein</topology>
        <orientation evidence="1">Cytoplasmic side</orientation>
    </subcellularLocation>
    <text evidence="1">Colocalizes with retromer components.</text>
</comment>
<comment type="similarity">
    <text evidence="5">Belongs to the sorting nexin family.</text>
</comment>
<comment type="sequence caution" evidence="5">
    <conflict type="erroneous initiation">
        <sequence resource="EMBL-CDS" id="BAC32202"/>
    </conflict>
</comment>
<comment type="sequence caution" evidence="5">
    <conflict type="erroneous initiation">
        <sequence resource="EMBL-CDS" id="BAE28549"/>
    </conflict>
</comment>
<feature type="chain" id="PRO_0000236199" description="Sorting nexin-8">
    <location>
        <begin position="1"/>
        <end position="459"/>
    </location>
</feature>
<feature type="domain" description="PX" evidence="3">
    <location>
        <begin position="68"/>
        <end position="176"/>
    </location>
</feature>
<feature type="region of interest" description="Disordered" evidence="4">
    <location>
        <begin position="1"/>
        <end position="37"/>
    </location>
</feature>
<feature type="binding site" evidence="1">
    <location>
        <position position="104"/>
    </location>
    <ligand>
        <name>a 1,2-diacyl-sn-glycero-3-phospho-(1D-myo-inositol-3-phosphate)</name>
        <dbReference type="ChEBI" id="CHEBI:58088"/>
    </ligand>
</feature>
<feature type="binding site" evidence="1">
    <location>
        <position position="130"/>
    </location>
    <ligand>
        <name>a 1,2-diacyl-sn-glycero-3-phospho-(1D-myo-inositol-3-phosphate)</name>
        <dbReference type="ChEBI" id="CHEBI:58088"/>
    </ligand>
</feature>
<feature type="binding site" evidence="1">
    <location>
        <position position="143"/>
    </location>
    <ligand>
        <name>a 1,2-diacyl-sn-glycero-3-phospho-(1D-myo-inositol-3-phosphate)</name>
        <dbReference type="ChEBI" id="CHEBI:58088"/>
    </ligand>
</feature>
<feature type="modified residue" description="Phosphothreonine" evidence="2">
    <location>
        <position position="446"/>
    </location>
</feature>
<feature type="modified residue" description="Phosphoserine" evidence="6">
    <location>
        <position position="450"/>
    </location>
</feature>
<feature type="sequence conflict" description="In Ref. 2; BAC38662." evidence="5" ref="2">
    <original>N</original>
    <variation>Y</variation>
    <location>
        <position position="222"/>
    </location>
</feature>
<feature type="sequence conflict" description="In Ref. 2; BAC38662." evidence="5" ref="2">
    <original>L</original>
    <variation>V</variation>
    <location>
        <position position="366"/>
    </location>
</feature>
<keyword id="KW-0967">Endosome</keyword>
<keyword id="KW-0446">Lipid-binding</keyword>
<keyword id="KW-0472">Membrane</keyword>
<keyword id="KW-0597">Phosphoprotein</keyword>
<keyword id="KW-0653">Protein transport</keyword>
<keyword id="KW-1185">Reference proteome</keyword>
<keyword id="KW-0813">Transport</keyword>
<accession>Q8CFD4</accession>
<accession>Q8BLI6</accession>
<accession>Q8BUQ7</accession>
<organism>
    <name type="scientific">Mus musculus</name>
    <name type="common">Mouse</name>
    <dbReference type="NCBI Taxonomy" id="10090"/>
    <lineage>
        <taxon>Eukaryota</taxon>
        <taxon>Metazoa</taxon>
        <taxon>Chordata</taxon>
        <taxon>Craniata</taxon>
        <taxon>Vertebrata</taxon>
        <taxon>Euteleostomi</taxon>
        <taxon>Mammalia</taxon>
        <taxon>Eutheria</taxon>
        <taxon>Euarchontoglires</taxon>
        <taxon>Glires</taxon>
        <taxon>Rodentia</taxon>
        <taxon>Myomorpha</taxon>
        <taxon>Muroidea</taxon>
        <taxon>Muridae</taxon>
        <taxon>Murinae</taxon>
        <taxon>Mus</taxon>
        <taxon>Mus</taxon>
    </lineage>
</organism>
<dbReference type="EMBL" id="BC037599">
    <property type="protein sequence ID" value="AAH37599.1"/>
    <property type="molecule type" value="mRNA"/>
</dbReference>
<dbReference type="EMBL" id="AK045061">
    <property type="protein sequence ID" value="BAC32202.1"/>
    <property type="status" value="ALT_INIT"/>
    <property type="molecule type" value="mRNA"/>
</dbReference>
<dbReference type="EMBL" id="AK082871">
    <property type="protein sequence ID" value="BAC38662.1"/>
    <property type="molecule type" value="mRNA"/>
</dbReference>
<dbReference type="EMBL" id="AK148429">
    <property type="protein sequence ID" value="BAE28549.1"/>
    <property type="status" value="ALT_INIT"/>
    <property type="molecule type" value="mRNA"/>
</dbReference>
<dbReference type="CCDS" id="CCDS39356.1"/>
<dbReference type="RefSeq" id="NP_758481.1">
    <property type="nucleotide sequence ID" value="NM_172277.4"/>
</dbReference>
<dbReference type="SMR" id="Q8CFD4"/>
<dbReference type="BioGRID" id="231175">
    <property type="interactions" value="5"/>
</dbReference>
<dbReference type="FunCoup" id="Q8CFD4">
    <property type="interactions" value="975"/>
</dbReference>
<dbReference type="IntAct" id="Q8CFD4">
    <property type="interactions" value="2"/>
</dbReference>
<dbReference type="MINT" id="Q8CFD4"/>
<dbReference type="STRING" id="10090.ENSMUSP00000031539"/>
<dbReference type="GlyGen" id="Q8CFD4">
    <property type="glycosylation" value="1 site, 1 O-linked glycan (1 site)"/>
</dbReference>
<dbReference type="iPTMnet" id="Q8CFD4"/>
<dbReference type="PhosphoSitePlus" id="Q8CFD4"/>
<dbReference type="PaxDb" id="10090-ENSMUSP00000031539"/>
<dbReference type="PeptideAtlas" id="Q8CFD4"/>
<dbReference type="ProteomicsDB" id="261545"/>
<dbReference type="Pumba" id="Q8CFD4"/>
<dbReference type="Antibodypedia" id="24341">
    <property type="antibodies" value="299 antibodies from 28 providers"/>
</dbReference>
<dbReference type="DNASU" id="231834"/>
<dbReference type="Ensembl" id="ENSMUST00000031539.12">
    <property type="protein sequence ID" value="ENSMUSP00000031539.8"/>
    <property type="gene ID" value="ENSMUSG00000029560.13"/>
</dbReference>
<dbReference type="GeneID" id="231834"/>
<dbReference type="KEGG" id="mmu:231834"/>
<dbReference type="UCSC" id="uc009ahp.1">
    <property type="organism name" value="mouse"/>
</dbReference>
<dbReference type="AGR" id="MGI:2443816"/>
<dbReference type="CTD" id="29886"/>
<dbReference type="MGI" id="MGI:2443816">
    <property type="gene designation" value="Snx8"/>
</dbReference>
<dbReference type="VEuPathDB" id="HostDB:ENSMUSG00000029560"/>
<dbReference type="eggNOG" id="KOG2273">
    <property type="taxonomic scope" value="Eukaryota"/>
</dbReference>
<dbReference type="GeneTree" id="ENSGT00460000041594"/>
<dbReference type="InParanoid" id="Q8CFD4"/>
<dbReference type="OrthoDB" id="10064318at2759"/>
<dbReference type="PhylomeDB" id="Q8CFD4"/>
<dbReference type="TreeFam" id="TF314082"/>
<dbReference type="BioGRID-ORCS" id="231834">
    <property type="hits" value="1 hit in 78 CRISPR screens"/>
</dbReference>
<dbReference type="ChiTaRS" id="Snx8">
    <property type="organism name" value="mouse"/>
</dbReference>
<dbReference type="PRO" id="PR:Q8CFD4"/>
<dbReference type="Proteomes" id="UP000000589">
    <property type="component" value="Chromosome 5"/>
</dbReference>
<dbReference type="RNAct" id="Q8CFD4">
    <property type="molecule type" value="protein"/>
</dbReference>
<dbReference type="Bgee" id="ENSMUSG00000029560">
    <property type="expression patterns" value="Expressed in yolk sac and 209 other cell types or tissues"/>
</dbReference>
<dbReference type="ExpressionAtlas" id="Q8CFD4">
    <property type="expression patterns" value="baseline and differential"/>
</dbReference>
<dbReference type="GO" id="GO:0005829">
    <property type="term" value="C:cytosol"/>
    <property type="evidence" value="ECO:0007669"/>
    <property type="project" value="GOC"/>
</dbReference>
<dbReference type="GO" id="GO:0031901">
    <property type="term" value="C:early endosome membrane"/>
    <property type="evidence" value="ECO:0000250"/>
    <property type="project" value="UniProtKB"/>
</dbReference>
<dbReference type="GO" id="GO:0035091">
    <property type="term" value="F:phosphatidylinositol binding"/>
    <property type="evidence" value="ECO:0000250"/>
    <property type="project" value="UniProtKB"/>
</dbReference>
<dbReference type="GO" id="GO:0034498">
    <property type="term" value="P:early endosome to Golgi transport"/>
    <property type="evidence" value="ECO:0000250"/>
    <property type="project" value="UniProtKB"/>
</dbReference>
<dbReference type="GO" id="GO:0006886">
    <property type="term" value="P:intracellular protein transport"/>
    <property type="evidence" value="ECO:0000250"/>
    <property type="project" value="UniProtKB"/>
</dbReference>
<dbReference type="CDD" id="cd07597">
    <property type="entry name" value="BAR_SNX8"/>
    <property type="match status" value="1"/>
</dbReference>
<dbReference type="CDD" id="cd06866">
    <property type="entry name" value="PX_SNX8_Mvp1p_like"/>
    <property type="match status" value="1"/>
</dbReference>
<dbReference type="FunFam" id="1.20.1270.60:FF:000049">
    <property type="entry name" value="Sorting nexin 8"/>
    <property type="match status" value="1"/>
</dbReference>
<dbReference type="FunFam" id="3.30.1520.10:FF:000032">
    <property type="entry name" value="Sorting nexin 8"/>
    <property type="match status" value="1"/>
</dbReference>
<dbReference type="Gene3D" id="1.20.1270.60">
    <property type="entry name" value="Arfaptin homology (AH) domain/BAR domain"/>
    <property type="match status" value="1"/>
</dbReference>
<dbReference type="Gene3D" id="3.30.1520.10">
    <property type="entry name" value="Phox-like domain"/>
    <property type="match status" value="1"/>
</dbReference>
<dbReference type="InterPro" id="IPR027267">
    <property type="entry name" value="AH/BAR_dom_sf"/>
</dbReference>
<dbReference type="InterPro" id="IPR001683">
    <property type="entry name" value="PX_dom"/>
</dbReference>
<dbReference type="InterPro" id="IPR036871">
    <property type="entry name" value="PX_dom_sf"/>
</dbReference>
<dbReference type="InterPro" id="IPR028662">
    <property type="entry name" value="SNX8/Mvp1"/>
</dbReference>
<dbReference type="InterPro" id="IPR035704">
    <property type="entry name" value="SNX8/Mvp1_PX"/>
</dbReference>
<dbReference type="InterPro" id="IPR045734">
    <property type="entry name" value="Snx8_BAR_dom"/>
</dbReference>
<dbReference type="PANTHER" id="PTHR46571">
    <property type="entry name" value="SORTING NEXIN-8"/>
    <property type="match status" value="1"/>
</dbReference>
<dbReference type="PANTHER" id="PTHR46571:SF1">
    <property type="entry name" value="SORTING NEXIN-8"/>
    <property type="match status" value="1"/>
</dbReference>
<dbReference type="Pfam" id="PF00787">
    <property type="entry name" value="PX"/>
    <property type="match status" value="1"/>
</dbReference>
<dbReference type="Pfam" id="PF19566">
    <property type="entry name" value="Snx8_BAR_dom"/>
    <property type="match status" value="1"/>
</dbReference>
<dbReference type="SMART" id="SM00312">
    <property type="entry name" value="PX"/>
    <property type="match status" value="1"/>
</dbReference>
<dbReference type="SUPFAM" id="SSF64268">
    <property type="entry name" value="PX domain"/>
    <property type="match status" value="1"/>
</dbReference>
<dbReference type="PROSITE" id="PS50195">
    <property type="entry name" value="PX"/>
    <property type="match status" value="1"/>
</dbReference>
<sequence length="459" mass="52059">MTGRAMDPLPSPAVAAAAEAEADEEADPPATGPRTSQVTEWRALDPGRMQMPQGNPLLLSYTLQELLAKDTVQVELIPEKKGLFLKHVEYEVSSQRFKSSVYRRYNDFVVFHEVLLHKFPYRMVPALPPKRVLGADREFIEGRRRALKRFINLVARHPPFSEDVLLKLFLSFSGSDVQHKLKEAAQCVGDEFMNCKLAARAKDFLPADIQTQFAMSRELIRNVYNSFYKLRDRAERIASRAIDNAADLLIFGKELSALGSDTTPLPSWAALHLSTWGSLKQALKGLSVEFALLADRAAQQGKKEENDVVEKLNLFLDLLQSYKDLCERHEKGVLHKHQRALHKYGLMKRQMMSAAHGREPESVEQLESRIVEQENVIQTMELRNYFSLYCLHQETQLVHVYLPLTSHILGAFVNSQIQGHKEMSKVWNDLKPKLSCLFAGPHSVLTPPRSPQEDGVCPH</sequence>